<organism>
    <name type="scientific">Methylacidiphilum infernorum (isolate V4)</name>
    <name type="common">Methylokorus infernorum (strain V4)</name>
    <dbReference type="NCBI Taxonomy" id="481448"/>
    <lineage>
        <taxon>Bacteria</taxon>
        <taxon>Pseudomonadati</taxon>
        <taxon>Verrucomicrobiota</taxon>
        <taxon>Methylacidiphilae</taxon>
        <taxon>Methylacidiphilales</taxon>
        <taxon>Methylacidiphilaceae</taxon>
        <taxon>Methylacidiphilum (ex Ratnadevi et al. 2023)</taxon>
    </lineage>
</organism>
<accession>B3DUF9</accession>
<sequence>MNAARMNIKVSTPSRNYFVRIGKGLLQEGGSLARQLKLEKKIALLFDQAVETYATTLIDSLKAHDFEPQALAIPSGEGSKSFKTLETIVTALAEMKLDRKSTIIAVGGGVLGDVAGFAASIFLRGISYVLVPTTLLSMVDSSIGGKTGINLPQGKNLVGSFYQPLEVWIDPEVLATLSPRLISAGMAEIIKYGMISDQKLLDEIEKKEQSDLLYLIKRSVEIKAEVVGEDEREQTGRRAILNFGHTLGHALEAANGYKDLLHGEAVAIGMHASCLLSNRLLSFPDESTQRLKKILQLYSLPLKARGLSKKDVLEALQLDKKRERGTISWILLQKIGLPITSKDITKEDIDWILKEVLA</sequence>
<evidence type="ECO:0000255" key="1">
    <source>
        <dbReference type="HAMAP-Rule" id="MF_00110"/>
    </source>
</evidence>
<feature type="chain" id="PRO_1000094545" description="3-dehydroquinate synthase">
    <location>
        <begin position="1"/>
        <end position="358"/>
    </location>
</feature>
<feature type="binding site" evidence="1">
    <location>
        <begin position="75"/>
        <end position="80"/>
    </location>
    <ligand>
        <name>NAD(+)</name>
        <dbReference type="ChEBI" id="CHEBI:57540"/>
    </ligand>
</feature>
<feature type="binding site" evidence="1">
    <location>
        <begin position="109"/>
        <end position="113"/>
    </location>
    <ligand>
        <name>NAD(+)</name>
        <dbReference type="ChEBI" id="CHEBI:57540"/>
    </ligand>
</feature>
<feature type="binding site" evidence="1">
    <location>
        <begin position="133"/>
        <end position="134"/>
    </location>
    <ligand>
        <name>NAD(+)</name>
        <dbReference type="ChEBI" id="CHEBI:57540"/>
    </ligand>
</feature>
<feature type="binding site" evidence="1">
    <location>
        <position position="146"/>
    </location>
    <ligand>
        <name>NAD(+)</name>
        <dbReference type="ChEBI" id="CHEBI:57540"/>
    </ligand>
</feature>
<feature type="binding site" evidence="1">
    <location>
        <position position="155"/>
    </location>
    <ligand>
        <name>NAD(+)</name>
        <dbReference type="ChEBI" id="CHEBI:57540"/>
    </ligand>
</feature>
<feature type="binding site" evidence="1">
    <location>
        <position position="188"/>
    </location>
    <ligand>
        <name>Zn(2+)</name>
        <dbReference type="ChEBI" id="CHEBI:29105"/>
    </ligand>
</feature>
<feature type="binding site" evidence="1">
    <location>
        <position position="245"/>
    </location>
    <ligand>
        <name>Zn(2+)</name>
        <dbReference type="ChEBI" id="CHEBI:29105"/>
    </ligand>
</feature>
<feature type="binding site" evidence="1">
    <location>
        <position position="262"/>
    </location>
    <ligand>
        <name>Zn(2+)</name>
        <dbReference type="ChEBI" id="CHEBI:29105"/>
    </ligand>
</feature>
<dbReference type="EC" id="4.2.3.4" evidence="1"/>
<dbReference type="EMBL" id="CP000975">
    <property type="protein sequence ID" value="ACD82962.1"/>
    <property type="molecule type" value="Genomic_DNA"/>
</dbReference>
<dbReference type="RefSeq" id="WP_012463244.1">
    <property type="nucleotide sequence ID" value="NC_010794.1"/>
</dbReference>
<dbReference type="SMR" id="B3DUF9"/>
<dbReference type="STRING" id="481448.Minf_0907"/>
<dbReference type="KEGG" id="min:Minf_0907"/>
<dbReference type="eggNOG" id="COG0337">
    <property type="taxonomic scope" value="Bacteria"/>
</dbReference>
<dbReference type="HOGENOM" id="CLU_001201_0_2_0"/>
<dbReference type="OrthoDB" id="9806583at2"/>
<dbReference type="UniPathway" id="UPA00053">
    <property type="reaction ID" value="UER00085"/>
</dbReference>
<dbReference type="Proteomes" id="UP000009149">
    <property type="component" value="Chromosome"/>
</dbReference>
<dbReference type="GO" id="GO:0005737">
    <property type="term" value="C:cytoplasm"/>
    <property type="evidence" value="ECO:0007669"/>
    <property type="project" value="UniProtKB-SubCell"/>
</dbReference>
<dbReference type="GO" id="GO:0003856">
    <property type="term" value="F:3-dehydroquinate synthase activity"/>
    <property type="evidence" value="ECO:0007669"/>
    <property type="project" value="UniProtKB-UniRule"/>
</dbReference>
<dbReference type="GO" id="GO:0046872">
    <property type="term" value="F:metal ion binding"/>
    <property type="evidence" value="ECO:0007669"/>
    <property type="project" value="UniProtKB-KW"/>
</dbReference>
<dbReference type="GO" id="GO:0000166">
    <property type="term" value="F:nucleotide binding"/>
    <property type="evidence" value="ECO:0007669"/>
    <property type="project" value="UniProtKB-KW"/>
</dbReference>
<dbReference type="GO" id="GO:0008652">
    <property type="term" value="P:amino acid biosynthetic process"/>
    <property type="evidence" value="ECO:0007669"/>
    <property type="project" value="UniProtKB-KW"/>
</dbReference>
<dbReference type="GO" id="GO:0009073">
    <property type="term" value="P:aromatic amino acid family biosynthetic process"/>
    <property type="evidence" value="ECO:0007669"/>
    <property type="project" value="UniProtKB-KW"/>
</dbReference>
<dbReference type="GO" id="GO:0009423">
    <property type="term" value="P:chorismate biosynthetic process"/>
    <property type="evidence" value="ECO:0007669"/>
    <property type="project" value="UniProtKB-UniRule"/>
</dbReference>
<dbReference type="CDD" id="cd08195">
    <property type="entry name" value="DHQS"/>
    <property type="match status" value="1"/>
</dbReference>
<dbReference type="FunFam" id="3.40.50.1970:FF:000007">
    <property type="entry name" value="Pentafunctional AROM polypeptide"/>
    <property type="match status" value="1"/>
</dbReference>
<dbReference type="Gene3D" id="3.40.50.1970">
    <property type="match status" value="1"/>
</dbReference>
<dbReference type="Gene3D" id="1.20.1090.10">
    <property type="entry name" value="Dehydroquinate synthase-like - alpha domain"/>
    <property type="match status" value="1"/>
</dbReference>
<dbReference type="HAMAP" id="MF_00110">
    <property type="entry name" value="DHQ_synthase"/>
    <property type="match status" value="1"/>
</dbReference>
<dbReference type="InterPro" id="IPR050071">
    <property type="entry name" value="Dehydroquinate_synthase"/>
</dbReference>
<dbReference type="InterPro" id="IPR016037">
    <property type="entry name" value="DHQ_synth_AroB"/>
</dbReference>
<dbReference type="InterPro" id="IPR030963">
    <property type="entry name" value="DHQ_synth_fam"/>
</dbReference>
<dbReference type="InterPro" id="IPR030960">
    <property type="entry name" value="DHQS/DOIS_N"/>
</dbReference>
<dbReference type="InterPro" id="IPR056179">
    <property type="entry name" value="DHQS_C"/>
</dbReference>
<dbReference type="NCBIfam" id="TIGR01357">
    <property type="entry name" value="aroB"/>
    <property type="match status" value="1"/>
</dbReference>
<dbReference type="PANTHER" id="PTHR43622">
    <property type="entry name" value="3-DEHYDROQUINATE SYNTHASE"/>
    <property type="match status" value="1"/>
</dbReference>
<dbReference type="PANTHER" id="PTHR43622:SF7">
    <property type="entry name" value="3-DEHYDROQUINATE SYNTHASE, CHLOROPLASTIC"/>
    <property type="match status" value="1"/>
</dbReference>
<dbReference type="Pfam" id="PF01761">
    <property type="entry name" value="DHQ_synthase"/>
    <property type="match status" value="1"/>
</dbReference>
<dbReference type="Pfam" id="PF24621">
    <property type="entry name" value="DHQS_C"/>
    <property type="match status" value="1"/>
</dbReference>
<dbReference type="PIRSF" id="PIRSF001455">
    <property type="entry name" value="DHQ_synth"/>
    <property type="match status" value="1"/>
</dbReference>
<dbReference type="SUPFAM" id="SSF56796">
    <property type="entry name" value="Dehydroquinate synthase-like"/>
    <property type="match status" value="1"/>
</dbReference>
<protein>
    <recommendedName>
        <fullName evidence="1">3-dehydroquinate synthase</fullName>
        <shortName evidence="1">DHQS</shortName>
        <ecNumber evidence="1">4.2.3.4</ecNumber>
    </recommendedName>
</protein>
<proteinExistence type="inferred from homology"/>
<comment type="function">
    <text evidence="1">Catalyzes the conversion of 3-deoxy-D-arabino-heptulosonate 7-phosphate (DAHP) to dehydroquinate (DHQ).</text>
</comment>
<comment type="catalytic activity">
    <reaction evidence="1">
        <text>7-phospho-2-dehydro-3-deoxy-D-arabino-heptonate = 3-dehydroquinate + phosphate</text>
        <dbReference type="Rhea" id="RHEA:21968"/>
        <dbReference type="ChEBI" id="CHEBI:32364"/>
        <dbReference type="ChEBI" id="CHEBI:43474"/>
        <dbReference type="ChEBI" id="CHEBI:58394"/>
        <dbReference type="EC" id="4.2.3.4"/>
    </reaction>
</comment>
<comment type="cofactor">
    <cofactor evidence="1">
        <name>Co(2+)</name>
        <dbReference type="ChEBI" id="CHEBI:48828"/>
    </cofactor>
    <cofactor evidence="1">
        <name>Zn(2+)</name>
        <dbReference type="ChEBI" id="CHEBI:29105"/>
    </cofactor>
    <text evidence="1">Binds 1 divalent metal cation per subunit. Can use either Co(2+) or Zn(2+).</text>
</comment>
<comment type="cofactor">
    <cofactor evidence="1">
        <name>NAD(+)</name>
        <dbReference type="ChEBI" id="CHEBI:57540"/>
    </cofactor>
</comment>
<comment type="pathway">
    <text evidence="1">Metabolic intermediate biosynthesis; chorismate biosynthesis; chorismate from D-erythrose 4-phosphate and phosphoenolpyruvate: step 2/7.</text>
</comment>
<comment type="subcellular location">
    <subcellularLocation>
        <location evidence="1">Cytoplasm</location>
    </subcellularLocation>
</comment>
<comment type="similarity">
    <text evidence="1">Belongs to the sugar phosphate cyclases superfamily. Dehydroquinate synthase family.</text>
</comment>
<gene>
    <name evidence="1" type="primary">aroB</name>
    <name type="ordered locus">Minf_0907</name>
</gene>
<name>AROB_METI4</name>
<keyword id="KW-0028">Amino-acid biosynthesis</keyword>
<keyword id="KW-0057">Aromatic amino acid biosynthesis</keyword>
<keyword id="KW-0170">Cobalt</keyword>
<keyword id="KW-0963">Cytoplasm</keyword>
<keyword id="KW-0456">Lyase</keyword>
<keyword id="KW-0479">Metal-binding</keyword>
<keyword id="KW-0520">NAD</keyword>
<keyword id="KW-0547">Nucleotide-binding</keyword>
<keyword id="KW-0862">Zinc</keyword>
<reference key="1">
    <citation type="journal article" date="2008" name="Biol. Direct">
        <title>Complete genome sequence of the extremely acidophilic methanotroph isolate V4, Methylacidiphilum infernorum, a representative of the bacterial phylum Verrucomicrobia.</title>
        <authorList>
            <person name="Hou S."/>
            <person name="Makarova K.S."/>
            <person name="Saw J.H."/>
            <person name="Senin P."/>
            <person name="Ly B.V."/>
            <person name="Zhou Z."/>
            <person name="Ren Y."/>
            <person name="Wang J."/>
            <person name="Galperin M.Y."/>
            <person name="Omelchenko M.V."/>
            <person name="Wolf Y.I."/>
            <person name="Yutin N."/>
            <person name="Koonin E.V."/>
            <person name="Stott M.B."/>
            <person name="Mountain B.W."/>
            <person name="Crowe M.A."/>
            <person name="Smirnova A.V."/>
            <person name="Dunfield P.F."/>
            <person name="Feng L."/>
            <person name="Wang L."/>
            <person name="Alam M."/>
        </authorList>
    </citation>
    <scope>NUCLEOTIDE SEQUENCE [LARGE SCALE GENOMIC DNA]</scope>
    <source>
        <strain>Isolate V4</strain>
    </source>
</reference>